<keyword id="KW-0472">Membrane</keyword>
<keyword id="KW-0812">Transmembrane</keyword>
<keyword id="KW-1133">Transmembrane helix</keyword>
<organism>
    <name type="scientific">Saccharomyces cerevisiae</name>
    <name type="common">Baker's yeast</name>
    <dbReference type="NCBI Taxonomy" id="4932"/>
    <lineage>
        <taxon>Eukaryota</taxon>
        <taxon>Fungi</taxon>
        <taxon>Dikarya</taxon>
        <taxon>Ascomycota</taxon>
        <taxon>Saccharomycotina</taxon>
        <taxon>Saccharomycetes</taxon>
        <taxon>Saccharomycetales</taxon>
        <taxon>Saccharomycetaceae</taxon>
        <taxon>Saccharomyces</taxon>
    </lineage>
</organism>
<sequence>MSNDSSGSEWELYRYTPSKGAAIALTVLFIVTTLIYSLQVVWDARKASKPEVDNPFDTPVDKCESITAISLGENYKKLTVRSTFSAFIPLFFGCIMEIVGYIARAVSSSNTKEIAPYVIQAVLLLIAPALYAATIYMLFGRLLHVMRCESLMIVSSRFGTSFFVFGDVVSFCLQAAGGGLMATVNGRTTGSNLITAGLVIQIVFFGVFIINEFRFSYSVARVCPFYRHISKKWWFLNLTLMLSSILIMVRSIVRLVEFVEGYDGFIISHEYFIYVFDAVPMLLAAIVFIVGSFFGNIFTTITECQSLKP</sequence>
<name>RTM1_YEASX</name>
<proteinExistence type="inferred from homology"/>
<comment type="function">
    <text>Confers resistance to molasses (to a particular toxic element present in some molasses).</text>
</comment>
<comment type="subcellular location">
    <subcellularLocation>
        <location evidence="2">Membrane</location>
        <topology evidence="2">Multi-pass membrane protein</topology>
    </subcellularLocation>
</comment>
<comment type="similarity">
    <text evidence="2">Belongs to the lipid-translocating exporter (LTE) (TC 9.A.26.1) family.</text>
</comment>
<accession>P40113</accession>
<reference key="1">
    <citation type="journal article" date="1995" name="Genetics">
        <title>RTM1: a member of a new family of telomeric repeated genes in yeast.</title>
        <authorList>
            <person name="Ness F."/>
            <person name="Aigle M."/>
        </authorList>
    </citation>
    <scope>NUCLEOTIDE SEQUENCE [GENOMIC DNA]</scope>
    <source>
        <strain>ATCC 28383 / FL100 / VTT C-80102</strain>
    </source>
</reference>
<feature type="chain" id="PRO_0000097516" description="Protein RTM1">
    <location>
        <begin position="1"/>
        <end position="309"/>
    </location>
</feature>
<feature type="transmembrane region" description="Helical" evidence="1">
    <location>
        <begin position="22"/>
        <end position="42"/>
    </location>
</feature>
<feature type="transmembrane region" description="Helical" evidence="1">
    <location>
        <begin position="83"/>
        <end position="103"/>
    </location>
</feature>
<feature type="transmembrane region" description="Helical" evidence="1">
    <location>
        <begin position="119"/>
        <end position="139"/>
    </location>
</feature>
<feature type="transmembrane region" description="Helical" evidence="1">
    <location>
        <begin position="162"/>
        <end position="182"/>
    </location>
</feature>
<feature type="transmembrane region" description="Helical" evidence="1">
    <location>
        <begin position="193"/>
        <end position="213"/>
    </location>
</feature>
<feature type="transmembrane region" description="Helical" evidence="1">
    <location>
        <begin position="233"/>
        <end position="253"/>
    </location>
</feature>
<feature type="transmembrane region" description="Helical" evidence="1">
    <location>
        <begin position="278"/>
        <end position="298"/>
    </location>
</feature>
<protein>
    <recommendedName>
        <fullName>Protein RTM1</fullName>
    </recommendedName>
</protein>
<gene>
    <name type="primary">RTM1</name>
</gene>
<evidence type="ECO:0000255" key="1"/>
<evidence type="ECO:0000305" key="2"/>
<dbReference type="EMBL" id="U02618">
    <property type="protein sequence ID" value="AAA81533.1"/>
    <property type="molecule type" value="Genomic_DNA"/>
</dbReference>
<dbReference type="PIR" id="S59140">
    <property type="entry name" value="S59140"/>
</dbReference>
<dbReference type="SGD" id="S000029677">
    <property type="gene designation" value="RTM1"/>
</dbReference>
<dbReference type="VEuPathDB" id="FungiDB:YER185W"/>
<dbReference type="GO" id="GO:0016020">
    <property type="term" value="C:membrane"/>
    <property type="evidence" value="ECO:0000255"/>
    <property type="project" value="SGD"/>
</dbReference>
<dbReference type="InterPro" id="IPR007568">
    <property type="entry name" value="RTA1"/>
</dbReference>
<dbReference type="PANTHER" id="PTHR31465">
    <property type="entry name" value="PROTEIN RTA1-RELATED"/>
    <property type="match status" value="1"/>
</dbReference>
<dbReference type="PANTHER" id="PTHR31465:SF1">
    <property type="entry name" value="PROTEIN RTA1-RELATED"/>
    <property type="match status" value="1"/>
</dbReference>
<dbReference type="Pfam" id="PF04479">
    <property type="entry name" value="RTA1"/>
    <property type="match status" value="1"/>
</dbReference>